<accession>Q8R6A7</accession>
<reference key="1">
    <citation type="journal article" date="2002" name="J. Bacteriol.">
        <title>Genome sequence and analysis of the oral bacterium Fusobacterium nucleatum strain ATCC 25586.</title>
        <authorList>
            <person name="Kapatral V."/>
            <person name="Anderson I."/>
            <person name="Ivanova N."/>
            <person name="Reznik G."/>
            <person name="Los T."/>
            <person name="Lykidis A."/>
            <person name="Bhattacharyya A."/>
            <person name="Bartman A."/>
            <person name="Gardner W."/>
            <person name="Grechkin G."/>
            <person name="Zhu L."/>
            <person name="Vasieva O."/>
            <person name="Chu L."/>
            <person name="Kogan Y."/>
            <person name="Chaga O."/>
            <person name="Goltsman E."/>
            <person name="Bernal A."/>
            <person name="Larsen N."/>
            <person name="D'Souza M."/>
            <person name="Walunas T."/>
            <person name="Pusch G."/>
            <person name="Haselkorn R."/>
            <person name="Fonstein M."/>
            <person name="Kyrpides N.C."/>
            <person name="Overbeek R."/>
        </authorList>
    </citation>
    <scope>NUCLEOTIDE SEQUENCE [LARGE SCALE GENOMIC DNA]</scope>
    <source>
        <strain>ATCC 25586 / DSM 15643 / BCRC 10681 / CIP 101130 / JCM 8532 / KCTC 2640 / LMG 13131 / VPI 4355</strain>
    </source>
</reference>
<proteinExistence type="inferred from homology"/>
<evidence type="ECO:0000255" key="1">
    <source>
        <dbReference type="HAMAP-Rule" id="MF_01554"/>
    </source>
</evidence>
<organism>
    <name type="scientific">Fusobacterium nucleatum subsp. nucleatum (strain ATCC 25586 / DSM 15643 / BCRC 10681 / CIP 101130 / JCM 8532 / KCTC 2640 / LMG 13131 / VPI 4355)</name>
    <dbReference type="NCBI Taxonomy" id="190304"/>
    <lineage>
        <taxon>Bacteria</taxon>
        <taxon>Fusobacteriati</taxon>
        <taxon>Fusobacteriota</taxon>
        <taxon>Fusobacteriia</taxon>
        <taxon>Fusobacteriales</taxon>
        <taxon>Fusobacteriaceae</taxon>
        <taxon>Fusobacterium</taxon>
    </lineage>
</organism>
<keyword id="KW-0413">Isomerase</keyword>
<keyword id="KW-0460">Magnesium</keyword>
<keyword id="KW-0479">Metal-binding</keyword>
<keyword id="KW-0597">Phosphoprotein</keyword>
<keyword id="KW-1185">Reference proteome</keyword>
<protein>
    <recommendedName>
        <fullName evidence="1">Phosphoglucosamine mutase</fullName>
        <ecNumber evidence="1">5.4.2.10</ecNumber>
    </recommendedName>
</protein>
<comment type="function">
    <text evidence="1">Catalyzes the conversion of glucosamine-6-phosphate to glucosamine-1-phosphate.</text>
</comment>
<comment type="catalytic activity">
    <reaction evidence="1">
        <text>alpha-D-glucosamine 1-phosphate = D-glucosamine 6-phosphate</text>
        <dbReference type="Rhea" id="RHEA:23424"/>
        <dbReference type="ChEBI" id="CHEBI:58516"/>
        <dbReference type="ChEBI" id="CHEBI:58725"/>
        <dbReference type="EC" id="5.4.2.10"/>
    </reaction>
</comment>
<comment type="cofactor">
    <cofactor evidence="1">
        <name>Mg(2+)</name>
        <dbReference type="ChEBI" id="CHEBI:18420"/>
    </cofactor>
    <text evidence="1">Binds 1 Mg(2+) ion per subunit.</text>
</comment>
<comment type="PTM">
    <text evidence="1">Activated by phosphorylation.</text>
</comment>
<comment type="similarity">
    <text evidence="1">Belongs to the phosphohexose mutase family.</text>
</comment>
<gene>
    <name evidence="1" type="primary">glmM</name>
    <name type="ordered locus">FN0366</name>
</gene>
<feature type="chain" id="PRO_0000147891" description="Phosphoglucosamine mutase">
    <location>
        <begin position="1"/>
        <end position="452"/>
    </location>
</feature>
<feature type="active site" description="Phosphoserine intermediate" evidence="1">
    <location>
        <position position="103"/>
    </location>
</feature>
<feature type="binding site" description="via phosphate group" evidence="1">
    <location>
        <position position="103"/>
    </location>
    <ligand>
        <name>Mg(2+)</name>
        <dbReference type="ChEBI" id="CHEBI:18420"/>
    </ligand>
</feature>
<feature type="binding site" evidence="1">
    <location>
        <position position="244"/>
    </location>
    <ligand>
        <name>Mg(2+)</name>
        <dbReference type="ChEBI" id="CHEBI:18420"/>
    </ligand>
</feature>
<feature type="binding site" evidence="1">
    <location>
        <position position="246"/>
    </location>
    <ligand>
        <name>Mg(2+)</name>
        <dbReference type="ChEBI" id="CHEBI:18420"/>
    </ligand>
</feature>
<feature type="binding site" evidence="1">
    <location>
        <position position="248"/>
    </location>
    <ligand>
        <name>Mg(2+)</name>
        <dbReference type="ChEBI" id="CHEBI:18420"/>
    </ligand>
</feature>
<feature type="modified residue" description="Phosphoserine" evidence="1">
    <location>
        <position position="103"/>
    </location>
</feature>
<sequence>MGRYFGTDGIRGEANRELTVDKALRLGYALGYYLKNNNPNEEKIKVIMGSDTRISGYMLRSALTAGLTSMGIYIDFVGVIPTPGVAYITKQKKAKAGIMISASHNPAKDNGIKIFNLEGYKLSDEIENQIEDYMDNLDKILANPLAGDKVGKFKYAEDEYFQYKNYLTQCVKGNFKDIKIVLDTANGAAYRAAKDVFLDLRAELVVINDAPNGRNINVKCGSTHPDILSKVVVGYEADLGLAYDGDADRLIAVDKFGNVIDGDKIIGILALGMKNKGTLKNNKVVTTVMSNIGFEKYLKENSIELLRANVGDRYVLEKMLAEDVVIGGEQSGHIILKDYATTGDGVLSSLKLVEVIRDTGKDLHELVSSIKDAPQTLINVKVDNIKKNTWDKNEIIMSFINEANKKYKDEVRILVRKSGTEPLIRVMTEGDDKQLVHKLAEDIAHLIEKELN</sequence>
<name>GLMM_FUSNN</name>
<dbReference type="EC" id="5.4.2.10" evidence="1"/>
<dbReference type="EMBL" id="AE009951">
    <property type="protein sequence ID" value="AAL94569.1"/>
    <property type="molecule type" value="Genomic_DNA"/>
</dbReference>
<dbReference type="RefSeq" id="NP_603270.1">
    <property type="nucleotide sequence ID" value="NC_003454.1"/>
</dbReference>
<dbReference type="RefSeq" id="WP_005902604.1">
    <property type="nucleotide sequence ID" value="NZ_OZ209243.1"/>
</dbReference>
<dbReference type="SMR" id="Q8R6A7"/>
<dbReference type="FunCoup" id="Q8R6A7">
    <property type="interactions" value="376"/>
</dbReference>
<dbReference type="STRING" id="190304.FN0366"/>
<dbReference type="PaxDb" id="190304-FN0366"/>
<dbReference type="EnsemblBacteria" id="AAL94569">
    <property type="protein sequence ID" value="AAL94569"/>
    <property type="gene ID" value="FN0366"/>
</dbReference>
<dbReference type="GeneID" id="79783375"/>
<dbReference type="KEGG" id="fnu:FN0366"/>
<dbReference type="PATRIC" id="fig|190304.8.peg.943"/>
<dbReference type="eggNOG" id="COG1109">
    <property type="taxonomic scope" value="Bacteria"/>
</dbReference>
<dbReference type="HOGENOM" id="CLU_016950_7_0_0"/>
<dbReference type="InParanoid" id="Q8R6A7"/>
<dbReference type="BioCyc" id="FNUC190304:G1FZS-963-MONOMER"/>
<dbReference type="Proteomes" id="UP000002521">
    <property type="component" value="Chromosome"/>
</dbReference>
<dbReference type="GO" id="GO:0005829">
    <property type="term" value="C:cytosol"/>
    <property type="evidence" value="ECO:0000318"/>
    <property type="project" value="GO_Central"/>
</dbReference>
<dbReference type="GO" id="GO:0000287">
    <property type="term" value="F:magnesium ion binding"/>
    <property type="evidence" value="ECO:0007669"/>
    <property type="project" value="UniProtKB-UniRule"/>
</dbReference>
<dbReference type="GO" id="GO:0008966">
    <property type="term" value="F:phosphoglucosamine mutase activity"/>
    <property type="evidence" value="ECO:0000318"/>
    <property type="project" value="GO_Central"/>
</dbReference>
<dbReference type="GO" id="GO:0004615">
    <property type="term" value="F:phosphomannomutase activity"/>
    <property type="evidence" value="ECO:0000318"/>
    <property type="project" value="GO_Central"/>
</dbReference>
<dbReference type="GO" id="GO:0005975">
    <property type="term" value="P:carbohydrate metabolic process"/>
    <property type="evidence" value="ECO:0007669"/>
    <property type="project" value="InterPro"/>
</dbReference>
<dbReference type="GO" id="GO:0009252">
    <property type="term" value="P:peptidoglycan biosynthetic process"/>
    <property type="evidence" value="ECO:0000318"/>
    <property type="project" value="GO_Central"/>
</dbReference>
<dbReference type="GO" id="GO:0006048">
    <property type="term" value="P:UDP-N-acetylglucosamine biosynthetic process"/>
    <property type="evidence" value="ECO:0000318"/>
    <property type="project" value="GO_Central"/>
</dbReference>
<dbReference type="CDD" id="cd05802">
    <property type="entry name" value="GlmM"/>
    <property type="match status" value="1"/>
</dbReference>
<dbReference type="FunFam" id="3.30.310.50:FF:000001">
    <property type="entry name" value="Phosphoglucosamine mutase"/>
    <property type="match status" value="1"/>
</dbReference>
<dbReference type="FunFam" id="3.40.120.10:FF:000001">
    <property type="entry name" value="Phosphoglucosamine mutase"/>
    <property type="match status" value="1"/>
</dbReference>
<dbReference type="FunFam" id="3.40.120.10:FF:000002">
    <property type="entry name" value="Phosphoglucosamine mutase"/>
    <property type="match status" value="1"/>
</dbReference>
<dbReference type="Gene3D" id="3.40.120.10">
    <property type="entry name" value="Alpha-D-Glucose-1,6-Bisphosphate, subunit A, domain 3"/>
    <property type="match status" value="3"/>
</dbReference>
<dbReference type="Gene3D" id="3.30.310.50">
    <property type="entry name" value="Alpha-D-phosphohexomutase, C-terminal domain"/>
    <property type="match status" value="1"/>
</dbReference>
<dbReference type="HAMAP" id="MF_01554_B">
    <property type="entry name" value="GlmM_B"/>
    <property type="match status" value="1"/>
</dbReference>
<dbReference type="InterPro" id="IPR005844">
    <property type="entry name" value="A-D-PHexomutase_a/b/a-I"/>
</dbReference>
<dbReference type="InterPro" id="IPR016055">
    <property type="entry name" value="A-D-PHexomutase_a/b/a-I/II/III"/>
</dbReference>
<dbReference type="InterPro" id="IPR005845">
    <property type="entry name" value="A-D-PHexomutase_a/b/a-II"/>
</dbReference>
<dbReference type="InterPro" id="IPR005846">
    <property type="entry name" value="A-D-PHexomutase_a/b/a-III"/>
</dbReference>
<dbReference type="InterPro" id="IPR005843">
    <property type="entry name" value="A-D-PHexomutase_C"/>
</dbReference>
<dbReference type="InterPro" id="IPR036900">
    <property type="entry name" value="A-D-PHexomutase_C_sf"/>
</dbReference>
<dbReference type="InterPro" id="IPR016066">
    <property type="entry name" value="A-D-PHexomutase_CS"/>
</dbReference>
<dbReference type="InterPro" id="IPR005841">
    <property type="entry name" value="Alpha-D-phosphohexomutase_SF"/>
</dbReference>
<dbReference type="InterPro" id="IPR006352">
    <property type="entry name" value="GlmM_bact"/>
</dbReference>
<dbReference type="InterPro" id="IPR050060">
    <property type="entry name" value="Phosphoglucosamine_mutase"/>
</dbReference>
<dbReference type="NCBIfam" id="TIGR01455">
    <property type="entry name" value="glmM"/>
    <property type="match status" value="1"/>
</dbReference>
<dbReference type="NCBIfam" id="NF008139">
    <property type="entry name" value="PRK10887.1"/>
    <property type="match status" value="1"/>
</dbReference>
<dbReference type="PANTHER" id="PTHR42946:SF1">
    <property type="entry name" value="PHOSPHOGLUCOMUTASE (ALPHA-D-GLUCOSE-1,6-BISPHOSPHATE-DEPENDENT)"/>
    <property type="match status" value="1"/>
</dbReference>
<dbReference type="PANTHER" id="PTHR42946">
    <property type="entry name" value="PHOSPHOHEXOSE MUTASE"/>
    <property type="match status" value="1"/>
</dbReference>
<dbReference type="Pfam" id="PF02878">
    <property type="entry name" value="PGM_PMM_I"/>
    <property type="match status" value="1"/>
</dbReference>
<dbReference type="Pfam" id="PF02879">
    <property type="entry name" value="PGM_PMM_II"/>
    <property type="match status" value="1"/>
</dbReference>
<dbReference type="Pfam" id="PF02880">
    <property type="entry name" value="PGM_PMM_III"/>
    <property type="match status" value="1"/>
</dbReference>
<dbReference type="Pfam" id="PF00408">
    <property type="entry name" value="PGM_PMM_IV"/>
    <property type="match status" value="1"/>
</dbReference>
<dbReference type="PRINTS" id="PR00509">
    <property type="entry name" value="PGMPMM"/>
</dbReference>
<dbReference type="SUPFAM" id="SSF55957">
    <property type="entry name" value="Phosphoglucomutase, C-terminal domain"/>
    <property type="match status" value="1"/>
</dbReference>
<dbReference type="SUPFAM" id="SSF53738">
    <property type="entry name" value="Phosphoglucomutase, first 3 domains"/>
    <property type="match status" value="3"/>
</dbReference>
<dbReference type="PROSITE" id="PS00710">
    <property type="entry name" value="PGM_PMM"/>
    <property type="match status" value="1"/>
</dbReference>